<feature type="chain" id="PRO_0000198982" description="Nucleoid occlusion factor SlmA">
    <location>
        <begin position="1"/>
        <end position="198"/>
    </location>
</feature>
<feature type="domain" description="HTH tetR-type" evidence="1">
    <location>
        <begin position="10"/>
        <end position="70"/>
    </location>
</feature>
<feature type="DNA-binding region" description="H-T-H motif" evidence="1">
    <location>
        <begin position="33"/>
        <end position="52"/>
    </location>
</feature>
<feature type="coiled-coil region" evidence="1">
    <location>
        <begin position="117"/>
        <end position="144"/>
    </location>
</feature>
<comment type="function">
    <text evidence="1">Required for nucleoid occlusion (NO) phenomenon, which prevents Z-ring formation and cell division over the nucleoid. Acts as a DNA-associated cell division inhibitor that binds simultaneously chromosomal DNA and FtsZ, and disrupts the assembly of FtsZ polymers. SlmA-DNA-binding sequences (SBS) are dispersed on non-Ter regions of the chromosome, preventing FtsZ polymerization at these regions.</text>
</comment>
<comment type="subunit">
    <text evidence="1">Homodimer. Interacts with FtsZ.</text>
</comment>
<comment type="subcellular location">
    <subcellularLocation>
        <location evidence="1">Cytoplasm</location>
        <location evidence="1">Nucleoid</location>
    </subcellularLocation>
</comment>
<comment type="similarity">
    <text evidence="1">Belongs to the nucleoid occlusion factor SlmA family.</text>
</comment>
<comment type="sequence caution" evidence="2">
    <conflict type="erroneous initiation">
        <sequence resource="EMBL-CDS" id="AAN45127"/>
    </conflict>
</comment>
<comment type="sequence caution" evidence="2">
    <conflict type="erroneous initiation">
        <sequence resource="EMBL-CDS" id="AAP19065"/>
    </conflict>
</comment>
<proteinExistence type="inferred from homology"/>
<evidence type="ECO:0000255" key="1">
    <source>
        <dbReference type="HAMAP-Rule" id="MF_01839"/>
    </source>
</evidence>
<evidence type="ECO:0000305" key="2"/>
<keyword id="KW-0131">Cell cycle</keyword>
<keyword id="KW-0132">Cell division</keyword>
<keyword id="KW-0175">Coiled coil</keyword>
<keyword id="KW-0963">Cytoplasm</keyword>
<keyword id="KW-0238">DNA-binding</keyword>
<keyword id="KW-1185">Reference proteome</keyword>
<accession>P0C094</accession>
<accession>P06969</accession>
<protein>
    <recommendedName>
        <fullName evidence="1">Nucleoid occlusion factor SlmA</fullName>
    </recommendedName>
</protein>
<reference key="1">
    <citation type="journal article" date="2002" name="Nucleic Acids Res.">
        <title>Genome sequence of Shigella flexneri 2a: insights into pathogenicity through comparison with genomes of Escherichia coli K12 and O157.</title>
        <authorList>
            <person name="Jin Q."/>
            <person name="Yuan Z."/>
            <person name="Xu J."/>
            <person name="Wang Y."/>
            <person name="Shen Y."/>
            <person name="Lu W."/>
            <person name="Wang J."/>
            <person name="Liu H."/>
            <person name="Yang J."/>
            <person name="Yang F."/>
            <person name="Zhang X."/>
            <person name="Zhang J."/>
            <person name="Yang G."/>
            <person name="Wu H."/>
            <person name="Qu D."/>
            <person name="Dong J."/>
            <person name="Sun L."/>
            <person name="Xue Y."/>
            <person name="Zhao A."/>
            <person name="Gao Y."/>
            <person name="Zhu J."/>
            <person name="Kan B."/>
            <person name="Ding K."/>
            <person name="Chen S."/>
            <person name="Cheng H."/>
            <person name="Yao Z."/>
            <person name="He B."/>
            <person name="Chen R."/>
            <person name="Ma D."/>
            <person name="Qiang B."/>
            <person name="Wen Y."/>
            <person name="Hou Y."/>
            <person name="Yu J."/>
        </authorList>
    </citation>
    <scope>NUCLEOTIDE SEQUENCE [LARGE SCALE GENOMIC DNA]</scope>
    <source>
        <strain>301 / Serotype 2a</strain>
    </source>
</reference>
<reference key="2">
    <citation type="journal article" date="2003" name="Infect. Immun.">
        <title>Complete genome sequence and comparative genomics of Shigella flexneri serotype 2a strain 2457T.</title>
        <authorList>
            <person name="Wei J."/>
            <person name="Goldberg M.B."/>
            <person name="Burland V."/>
            <person name="Venkatesan M.M."/>
            <person name="Deng W."/>
            <person name="Fournier G."/>
            <person name="Mayhew G.F."/>
            <person name="Plunkett G. III"/>
            <person name="Rose D.J."/>
            <person name="Darling A."/>
            <person name="Mau B."/>
            <person name="Perna N.T."/>
            <person name="Payne S.M."/>
            <person name="Runyen-Janecky L.J."/>
            <person name="Zhou S."/>
            <person name="Schwartz D.C."/>
            <person name="Blattner F.R."/>
        </authorList>
    </citation>
    <scope>NUCLEOTIDE SEQUENCE [LARGE SCALE GENOMIC DNA]</scope>
    <source>
        <strain>ATCC 700930 / 2457T / Serotype 2a</strain>
    </source>
</reference>
<gene>
    <name evidence="1" type="primary">slmA</name>
    <name type="ordered locus">SF3680</name>
    <name type="ordered locus">S4088</name>
</gene>
<sequence length="198" mass="22836">MAEKQTAKRNRREEILQSLALMLESSDGSQRITTAKLAASVGVSEAALYRHFPSKTRMFDSLIEFIEDSLITRINLILKDEKDTTARLRLIVLLLLGFGERNPGLTRILTGHALMFEQDRLQGRINQLFERIEAQLRQVLREKRMREGEGYTTDETLLASQILAFCEGMLSRFVRSEFKYRPTDDFDARWPLIAAQLQ</sequence>
<organism>
    <name type="scientific">Shigella flexneri</name>
    <dbReference type="NCBI Taxonomy" id="623"/>
    <lineage>
        <taxon>Bacteria</taxon>
        <taxon>Pseudomonadati</taxon>
        <taxon>Pseudomonadota</taxon>
        <taxon>Gammaproteobacteria</taxon>
        <taxon>Enterobacterales</taxon>
        <taxon>Enterobacteriaceae</taxon>
        <taxon>Shigella</taxon>
    </lineage>
</organism>
<name>SLMA_SHIFL</name>
<dbReference type="EMBL" id="AE005674">
    <property type="protein sequence ID" value="AAN45127.1"/>
    <property type="status" value="ALT_INIT"/>
    <property type="molecule type" value="Genomic_DNA"/>
</dbReference>
<dbReference type="EMBL" id="AE014073">
    <property type="protein sequence ID" value="AAP19065.1"/>
    <property type="status" value="ALT_INIT"/>
    <property type="molecule type" value="Genomic_DNA"/>
</dbReference>
<dbReference type="RefSeq" id="WP_000818601.1">
    <property type="nucleotide sequence ID" value="NZ_WPGW01000042.1"/>
</dbReference>
<dbReference type="SMR" id="P0C094"/>
<dbReference type="STRING" id="198214.SF3680"/>
<dbReference type="PaxDb" id="198214-SF3680"/>
<dbReference type="GeneID" id="93778356"/>
<dbReference type="KEGG" id="sfl:SF3680"/>
<dbReference type="KEGG" id="sfx:S4088"/>
<dbReference type="PATRIC" id="fig|198214.7.peg.4343"/>
<dbReference type="HOGENOM" id="CLU_069356_5_0_6"/>
<dbReference type="Proteomes" id="UP000001006">
    <property type="component" value="Chromosome"/>
</dbReference>
<dbReference type="Proteomes" id="UP000002673">
    <property type="component" value="Chromosome"/>
</dbReference>
<dbReference type="GO" id="GO:0043590">
    <property type="term" value="C:bacterial nucleoid"/>
    <property type="evidence" value="ECO:0007669"/>
    <property type="project" value="UniProtKB-UniRule"/>
</dbReference>
<dbReference type="GO" id="GO:0005737">
    <property type="term" value="C:cytoplasm"/>
    <property type="evidence" value="ECO:0007669"/>
    <property type="project" value="UniProtKB-UniRule"/>
</dbReference>
<dbReference type="GO" id="GO:0003700">
    <property type="term" value="F:DNA-binding transcription factor activity"/>
    <property type="evidence" value="ECO:0007669"/>
    <property type="project" value="TreeGrafter"/>
</dbReference>
<dbReference type="GO" id="GO:0000976">
    <property type="term" value="F:transcription cis-regulatory region binding"/>
    <property type="evidence" value="ECO:0007669"/>
    <property type="project" value="TreeGrafter"/>
</dbReference>
<dbReference type="GO" id="GO:0051301">
    <property type="term" value="P:cell division"/>
    <property type="evidence" value="ECO:0007669"/>
    <property type="project" value="UniProtKB-KW"/>
</dbReference>
<dbReference type="GO" id="GO:0010974">
    <property type="term" value="P:negative regulation of division septum assembly"/>
    <property type="evidence" value="ECO:0007669"/>
    <property type="project" value="InterPro"/>
</dbReference>
<dbReference type="FunFam" id="1.10.357.10:FF:000002">
    <property type="entry name" value="Nucleoid occlusion factor SlmA"/>
    <property type="match status" value="1"/>
</dbReference>
<dbReference type="Gene3D" id="1.10.357.10">
    <property type="entry name" value="Tetracycline Repressor, domain 2"/>
    <property type="match status" value="1"/>
</dbReference>
<dbReference type="HAMAP" id="MF_01839">
    <property type="entry name" value="NO_factor_SlmA"/>
    <property type="match status" value="1"/>
</dbReference>
<dbReference type="InterPro" id="IPR023772">
    <property type="entry name" value="DNA-bd_HTH_TetR-type_CS"/>
</dbReference>
<dbReference type="InterPro" id="IPR009057">
    <property type="entry name" value="Homeodomain-like_sf"/>
</dbReference>
<dbReference type="InterPro" id="IPR050109">
    <property type="entry name" value="HTH-type_TetR-like_transc_reg"/>
</dbReference>
<dbReference type="InterPro" id="IPR001647">
    <property type="entry name" value="HTH_TetR"/>
</dbReference>
<dbReference type="InterPro" id="IPR023769">
    <property type="entry name" value="NO_SlmA"/>
</dbReference>
<dbReference type="InterPro" id="IPR054580">
    <property type="entry name" value="SlmA-like_C"/>
</dbReference>
<dbReference type="InterPro" id="IPR036271">
    <property type="entry name" value="Tet_transcr_reg_TetR-rel_C_sf"/>
</dbReference>
<dbReference type="NCBIfam" id="NF007015">
    <property type="entry name" value="PRK09480.1"/>
    <property type="match status" value="1"/>
</dbReference>
<dbReference type="PANTHER" id="PTHR30055">
    <property type="entry name" value="HTH-TYPE TRANSCRIPTIONAL REGULATOR RUTR"/>
    <property type="match status" value="1"/>
</dbReference>
<dbReference type="PANTHER" id="PTHR30055:SF183">
    <property type="entry name" value="NUCLEOID OCCLUSION FACTOR SLMA"/>
    <property type="match status" value="1"/>
</dbReference>
<dbReference type="Pfam" id="PF22276">
    <property type="entry name" value="SlmA-like_C"/>
    <property type="match status" value="1"/>
</dbReference>
<dbReference type="Pfam" id="PF00440">
    <property type="entry name" value="TetR_N"/>
    <property type="match status" value="1"/>
</dbReference>
<dbReference type="SUPFAM" id="SSF46689">
    <property type="entry name" value="Homeodomain-like"/>
    <property type="match status" value="1"/>
</dbReference>
<dbReference type="SUPFAM" id="SSF48498">
    <property type="entry name" value="Tetracyclin repressor-like, C-terminal domain"/>
    <property type="match status" value="1"/>
</dbReference>
<dbReference type="PROSITE" id="PS01081">
    <property type="entry name" value="HTH_TETR_1"/>
    <property type="match status" value="1"/>
</dbReference>
<dbReference type="PROSITE" id="PS50977">
    <property type="entry name" value="HTH_TETR_2"/>
    <property type="match status" value="1"/>
</dbReference>